<proteinExistence type="inferred from homology"/>
<accession>B7MD41</accession>
<protein>
    <recommendedName>
        <fullName evidence="1">Anti-adapter protein IraP</fullName>
    </recommendedName>
</protein>
<keyword id="KW-0175">Coiled coil</keyword>
<keyword id="KW-0963">Cytoplasm</keyword>
<keyword id="KW-1185">Reference proteome</keyword>
<keyword id="KW-0346">Stress response</keyword>
<gene>
    <name evidence="1" type="primary">iraP</name>
    <name type="ordered locus">ECS88_0376</name>
</gene>
<feature type="chain" id="PRO_1000138482" description="Anti-adapter protein IraP">
    <location>
        <begin position="1"/>
        <end position="86"/>
    </location>
</feature>
<feature type="coiled-coil region" evidence="1">
    <location>
        <begin position="1"/>
        <end position="36"/>
    </location>
</feature>
<reference key="1">
    <citation type="journal article" date="2009" name="PLoS Genet.">
        <title>Organised genome dynamics in the Escherichia coli species results in highly diverse adaptive paths.</title>
        <authorList>
            <person name="Touchon M."/>
            <person name="Hoede C."/>
            <person name="Tenaillon O."/>
            <person name="Barbe V."/>
            <person name="Baeriswyl S."/>
            <person name="Bidet P."/>
            <person name="Bingen E."/>
            <person name="Bonacorsi S."/>
            <person name="Bouchier C."/>
            <person name="Bouvet O."/>
            <person name="Calteau A."/>
            <person name="Chiapello H."/>
            <person name="Clermont O."/>
            <person name="Cruveiller S."/>
            <person name="Danchin A."/>
            <person name="Diard M."/>
            <person name="Dossat C."/>
            <person name="Karoui M.E."/>
            <person name="Frapy E."/>
            <person name="Garry L."/>
            <person name="Ghigo J.M."/>
            <person name="Gilles A.M."/>
            <person name="Johnson J."/>
            <person name="Le Bouguenec C."/>
            <person name="Lescat M."/>
            <person name="Mangenot S."/>
            <person name="Martinez-Jehanne V."/>
            <person name="Matic I."/>
            <person name="Nassif X."/>
            <person name="Oztas S."/>
            <person name="Petit M.A."/>
            <person name="Pichon C."/>
            <person name="Rouy Z."/>
            <person name="Ruf C.S."/>
            <person name="Schneider D."/>
            <person name="Tourret J."/>
            <person name="Vacherie B."/>
            <person name="Vallenet D."/>
            <person name="Medigue C."/>
            <person name="Rocha E.P.C."/>
            <person name="Denamur E."/>
        </authorList>
    </citation>
    <scope>NUCLEOTIDE SEQUENCE [LARGE SCALE GENOMIC DNA]</scope>
    <source>
        <strain>S88 / ExPEC</strain>
    </source>
</reference>
<comment type="function">
    <text evidence="1">Inhibits RpoS proteolysis by regulating RssB activity, thereby increasing the stability of the sigma stress factor RpoS especially during phosphate starvation, but also in stationary phase and during nitrogen starvation. Its effect on RpoS stability is due to its interaction with RssB, which probably blocks the interaction of RssB with RpoS, and the consequent delivery of the RssB-RpoS complex to the ClpXP protein degradation pathway.</text>
</comment>
<comment type="subunit">
    <text evidence="1">Interacts with RssB.</text>
</comment>
<comment type="subcellular location">
    <subcellularLocation>
        <location evidence="1">Cytoplasm</location>
    </subcellularLocation>
</comment>
<comment type="similarity">
    <text evidence="1">Belongs to the IraP family.</text>
</comment>
<organism>
    <name type="scientific">Escherichia coli O45:K1 (strain S88 / ExPEC)</name>
    <dbReference type="NCBI Taxonomy" id="585035"/>
    <lineage>
        <taxon>Bacteria</taxon>
        <taxon>Pseudomonadati</taxon>
        <taxon>Pseudomonadota</taxon>
        <taxon>Gammaproteobacteria</taxon>
        <taxon>Enterobacterales</taxon>
        <taxon>Enterobacteriaceae</taxon>
        <taxon>Escherichia</taxon>
    </lineage>
</organism>
<name>IRAP_ECO45</name>
<evidence type="ECO:0000255" key="1">
    <source>
        <dbReference type="HAMAP-Rule" id="MF_01198"/>
    </source>
</evidence>
<sequence>MKNLIAELLFKLAQKEEESKELCAQVEALEIIVTAMLRNMAQNDQQRLIDQVEGALYEVKPDASIPDDDTELLRDYVKKLLRHPRQ</sequence>
<dbReference type="EMBL" id="CU928161">
    <property type="protein sequence ID" value="CAR01726.1"/>
    <property type="molecule type" value="Genomic_DNA"/>
</dbReference>
<dbReference type="RefSeq" id="WP_000792973.1">
    <property type="nucleotide sequence ID" value="NC_011742.1"/>
</dbReference>
<dbReference type="SMR" id="B7MD41"/>
<dbReference type="KEGG" id="ecz:ECS88_0376"/>
<dbReference type="HOGENOM" id="CLU_169517_0_0_6"/>
<dbReference type="Proteomes" id="UP000000747">
    <property type="component" value="Chromosome"/>
</dbReference>
<dbReference type="GO" id="GO:0005737">
    <property type="term" value="C:cytoplasm"/>
    <property type="evidence" value="ECO:0007669"/>
    <property type="project" value="UniProtKB-SubCell"/>
</dbReference>
<dbReference type="GO" id="GO:0009267">
    <property type="term" value="P:cellular response to starvation"/>
    <property type="evidence" value="ECO:0007669"/>
    <property type="project" value="UniProtKB-UniRule"/>
</dbReference>
<dbReference type="HAMAP" id="MF_01198">
    <property type="entry name" value="Anti_adapt_IraP"/>
    <property type="match status" value="1"/>
</dbReference>
<dbReference type="InterPro" id="IPR019732">
    <property type="entry name" value="SigmaS_Anti-adapt_IraP"/>
</dbReference>
<dbReference type="NCBIfam" id="NF007598">
    <property type="entry name" value="PRK10244.1"/>
    <property type="match status" value="1"/>
</dbReference>
<dbReference type="Pfam" id="PF10796">
    <property type="entry name" value="Anti-adapt_IraP"/>
    <property type="match status" value="1"/>
</dbReference>